<evidence type="ECO:0000255" key="1">
    <source>
        <dbReference type="HAMAP-Rule" id="MF_00740"/>
    </source>
</evidence>
<reference key="1">
    <citation type="journal article" date="2008" name="J. Bacteriol.">
        <title>The pangenome structure of Escherichia coli: comparative genomic analysis of E. coli commensal and pathogenic isolates.</title>
        <authorList>
            <person name="Rasko D.A."/>
            <person name="Rosovitz M.J."/>
            <person name="Myers G.S.A."/>
            <person name="Mongodin E.F."/>
            <person name="Fricke W.F."/>
            <person name="Gajer P."/>
            <person name="Crabtree J."/>
            <person name="Sebaihia M."/>
            <person name="Thomson N.R."/>
            <person name="Chaudhuri R."/>
            <person name="Henderson I.R."/>
            <person name="Sperandio V."/>
            <person name="Ravel J."/>
        </authorList>
    </citation>
    <scope>NUCLEOTIDE SEQUENCE [LARGE SCALE GENOMIC DNA]</scope>
    <source>
        <strain>HS</strain>
    </source>
</reference>
<proteinExistence type="inferred from homology"/>
<gene>
    <name evidence="1" type="primary">deoB</name>
    <name type="ordered locus">EcHS_A4618</name>
</gene>
<name>DEOB_ECOHS</name>
<accession>A8A8B2</accession>
<dbReference type="EC" id="5.4.2.7" evidence="1"/>
<dbReference type="EMBL" id="CP000802">
    <property type="protein sequence ID" value="ABV08766.1"/>
    <property type="molecule type" value="Genomic_DNA"/>
</dbReference>
<dbReference type="RefSeq" id="WP_000816471.1">
    <property type="nucleotide sequence ID" value="NC_009800.1"/>
</dbReference>
<dbReference type="SMR" id="A8A8B2"/>
<dbReference type="GeneID" id="89519362"/>
<dbReference type="KEGG" id="ecx:EcHS_A4618"/>
<dbReference type="HOGENOM" id="CLU_053861_0_0_6"/>
<dbReference type="UniPathway" id="UPA00002">
    <property type="reaction ID" value="UER00467"/>
</dbReference>
<dbReference type="GO" id="GO:0005829">
    <property type="term" value="C:cytosol"/>
    <property type="evidence" value="ECO:0007669"/>
    <property type="project" value="TreeGrafter"/>
</dbReference>
<dbReference type="GO" id="GO:0000287">
    <property type="term" value="F:magnesium ion binding"/>
    <property type="evidence" value="ECO:0007669"/>
    <property type="project" value="InterPro"/>
</dbReference>
<dbReference type="GO" id="GO:0030145">
    <property type="term" value="F:manganese ion binding"/>
    <property type="evidence" value="ECO:0007669"/>
    <property type="project" value="UniProtKB-UniRule"/>
</dbReference>
<dbReference type="GO" id="GO:0008973">
    <property type="term" value="F:phosphopentomutase activity"/>
    <property type="evidence" value="ECO:0007669"/>
    <property type="project" value="UniProtKB-UniRule"/>
</dbReference>
<dbReference type="GO" id="GO:0006018">
    <property type="term" value="P:2-deoxyribose 1-phosphate catabolic process"/>
    <property type="evidence" value="ECO:0007669"/>
    <property type="project" value="UniProtKB-UniRule"/>
</dbReference>
<dbReference type="GO" id="GO:0006015">
    <property type="term" value="P:5-phosphoribose 1-diphosphate biosynthetic process"/>
    <property type="evidence" value="ECO:0007669"/>
    <property type="project" value="UniProtKB-UniPathway"/>
</dbReference>
<dbReference type="GO" id="GO:0043094">
    <property type="term" value="P:metabolic compound salvage"/>
    <property type="evidence" value="ECO:0007669"/>
    <property type="project" value="InterPro"/>
</dbReference>
<dbReference type="GO" id="GO:0009117">
    <property type="term" value="P:nucleotide metabolic process"/>
    <property type="evidence" value="ECO:0007669"/>
    <property type="project" value="InterPro"/>
</dbReference>
<dbReference type="CDD" id="cd16009">
    <property type="entry name" value="PPM"/>
    <property type="match status" value="1"/>
</dbReference>
<dbReference type="FunFam" id="3.30.70.1250:FF:000001">
    <property type="entry name" value="Phosphopentomutase"/>
    <property type="match status" value="1"/>
</dbReference>
<dbReference type="Gene3D" id="3.40.720.10">
    <property type="entry name" value="Alkaline Phosphatase, subunit A"/>
    <property type="match status" value="1"/>
</dbReference>
<dbReference type="Gene3D" id="3.30.70.1250">
    <property type="entry name" value="Phosphopentomutase"/>
    <property type="match status" value="1"/>
</dbReference>
<dbReference type="HAMAP" id="MF_00740">
    <property type="entry name" value="Phosphopentomut"/>
    <property type="match status" value="1"/>
</dbReference>
<dbReference type="InterPro" id="IPR017850">
    <property type="entry name" value="Alkaline_phosphatase_core_sf"/>
</dbReference>
<dbReference type="InterPro" id="IPR010045">
    <property type="entry name" value="DeoB"/>
</dbReference>
<dbReference type="InterPro" id="IPR006124">
    <property type="entry name" value="Metalloenzyme"/>
</dbReference>
<dbReference type="InterPro" id="IPR024052">
    <property type="entry name" value="Phosphopentomutase_DeoB_cap_sf"/>
</dbReference>
<dbReference type="NCBIfam" id="TIGR01696">
    <property type="entry name" value="deoB"/>
    <property type="match status" value="1"/>
</dbReference>
<dbReference type="NCBIfam" id="NF003766">
    <property type="entry name" value="PRK05362.1"/>
    <property type="match status" value="1"/>
</dbReference>
<dbReference type="PANTHER" id="PTHR21110">
    <property type="entry name" value="PHOSPHOPENTOMUTASE"/>
    <property type="match status" value="1"/>
</dbReference>
<dbReference type="PANTHER" id="PTHR21110:SF0">
    <property type="entry name" value="PHOSPHOPENTOMUTASE"/>
    <property type="match status" value="1"/>
</dbReference>
<dbReference type="Pfam" id="PF01676">
    <property type="entry name" value="Metalloenzyme"/>
    <property type="match status" value="1"/>
</dbReference>
<dbReference type="PIRSF" id="PIRSF001491">
    <property type="entry name" value="Ppentomutase"/>
    <property type="match status" value="1"/>
</dbReference>
<dbReference type="SUPFAM" id="SSF53649">
    <property type="entry name" value="Alkaline phosphatase-like"/>
    <property type="match status" value="1"/>
</dbReference>
<dbReference type="SUPFAM" id="SSF143856">
    <property type="entry name" value="DeoB insert domain-like"/>
    <property type="match status" value="1"/>
</dbReference>
<comment type="function">
    <text evidence="1">Isomerase that catalyzes the conversion of deoxy-ribose 1-phosphate (dRib-1-P) and ribose 1-phosphate (Rib-1-P) to deoxy-ribose 5-phosphate (dRib-5-P) and ribose 5-phosphate (Rib-5-P), respectively.</text>
</comment>
<comment type="catalytic activity">
    <reaction evidence="1">
        <text>2-deoxy-alpha-D-ribose 1-phosphate = 2-deoxy-D-ribose 5-phosphate</text>
        <dbReference type="Rhea" id="RHEA:27658"/>
        <dbReference type="ChEBI" id="CHEBI:57259"/>
        <dbReference type="ChEBI" id="CHEBI:62877"/>
        <dbReference type="EC" id="5.4.2.7"/>
    </reaction>
</comment>
<comment type="catalytic activity">
    <reaction evidence="1">
        <text>alpha-D-ribose 1-phosphate = D-ribose 5-phosphate</text>
        <dbReference type="Rhea" id="RHEA:18793"/>
        <dbReference type="ChEBI" id="CHEBI:57720"/>
        <dbReference type="ChEBI" id="CHEBI:78346"/>
        <dbReference type="EC" id="5.4.2.7"/>
    </reaction>
</comment>
<comment type="cofactor">
    <cofactor evidence="1">
        <name>Mn(2+)</name>
        <dbReference type="ChEBI" id="CHEBI:29035"/>
    </cofactor>
    <text evidence="1">Binds 2 manganese ions.</text>
</comment>
<comment type="pathway">
    <text evidence="1">Carbohydrate degradation; 2-deoxy-D-ribose 1-phosphate degradation; D-glyceraldehyde 3-phosphate and acetaldehyde from 2-deoxy-alpha-D-ribose 1-phosphate: step 1/2.</text>
</comment>
<comment type="subcellular location">
    <subcellularLocation>
        <location evidence="1">Cytoplasm</location>
    </subcellularLocation>
</comment>
<comment type="similarity">
    <text evidence="1">Belongs to the phosphopentomutase family.</text>
</comment>
<organism>
    <name type="scientific">Escherichia coli O9:H4 (strain HS)</name>
    <dbReference type="NCBI Taxonomy" id="331112"/>
    <lineage>
        <taxon>Bacteria</taxon>
        <taxon>Pseudomonadati</taxon>
        <taxon>Pseudomonadota</taxon>
        <taxon>Gammaproteobacteria</taxon>
        <taxon>Enterobacterales</taxon>
        <taxon>Enterobacteriaceae</taxon>
        <taxon>Escherichia</taxon>
    </lineage>
</organism>
<sequence>MKRAFIMVLDSFGIGATEDAERFGDVGADTLGHIAEACAKGEADNGRKGPLNLPNLTRLGLAKAHEGSTGFIPAGMDGNAEVIGAYAWAHEMSSGKDTPSGHWEIAGVPVLFEWGYFSDHENSFPQELLDKLVERANLPGYLGNCHSSGTVILDQLGEEHMKTGKPIFYTSADSVFQIACHEETFGLDKLYELCEIAREELTNGGYNIGRVIARPFIGDKAGNFQRTGNRHDLAVEPPAPTVLQKLVDEKHGQVVSVGKIADIYANCGITKKVKATGLDALFDATIKEMKEAGDNTIVFTNFVDFDSSWGHRRDVAGYAAGLELFDRRLPELMSLLRDDDILILTADHGCDPTWTGTDHTREHIPVLVYGPKVKPGSLGHRETFADIGQTLAKYFGTSDMEYGKAMF</sequence>
<feature type="chain" id="PRO_1000062149" description="Phosphopentomutase">
    <location>
        <begin position="1"/>
        <end position="407"/>
    </location>
</feature>
<feature type="binding site" evidence="1">
    <location>
        <position position="10"/>
    </location>
    <ligand>
        <name>Mn(2+)</name>
        <dbReference type="ChEBI" id="CHEBI:29035"/>
        <label>1</label>
    </ligand>
</feature>
<feature type="binding site" evidence="1">
    <location>
        <position position="306"/>
    </location>
    <ligand>
        <name>Mn(2+)</name>
        <dbReference type="ChEBI" id="CHEBI:29035"/>
        <label>2</label>
    </ligand>
</feature>
<feature type="binding site" evidence="1">
    <location>
        <position position="311"/>
    </location>
    <ligand>
        <name>Mn(2+)</name>
        <dbReference type="ChEBI" id="CHEBI:29035"/>
        <label>2</label>
    </ligand>
</feature>
<feature type="binding site" evidence="1">
    <location>
        <position position="347"/>
    </location>
    <ligand>
        <name>Mn(2+)</name>
        <dbReference type="ChEBI" id="CHEBI:29035"/>
        <label>1</label>
    </ligand>
</feature>
<feature type="binding site" evidence="1">
    <location>
        <position position="348"/>
    </location>
    <ligand>
        <name>Mn(2+)</name>
        <dbReference type="ChEBI" id="CHEBI:29035"/>
        <label>1</label>
    </ligand>
</feature>
<feature type="binding site" evidence="1">
    <location>
        <position position="359"/>
    </location>
    <ligand>
        <name>Mn(2+)</name>
        <dbReference type="ChEBI" id="CHEBI:29035"/>
        <label>2</label>
    </ligand>
</feature>
<protein>
    <recommendedName>
        <fullName evidence="1">Phosphopentomutase</fullName>
        <ecNumber evidence="1">5.4.2.7</ecNumber>
    </recommendedName>
    <alternativeName>
        <fullName evidence="1">Phosphodeoxyribomutase</fullName>
    </alternativeName>
</protein>
<keyword id="KW-0963">Cytoplasm</keyword>
<keyword id="KW-0413">Isomerase</keyword>
<keyword id="KW-0464">Manganese</keyword>
<keyword id="KW-0479">Metal-binding</keyword>